<proteinExistence type="inferred from homology"/>
<feature type="chain" id="PRO_1000132462" description="Glycine dehydrogenase (decarboxylating)">
    <location>
        <begin position="1"/>
        <end position="959"/>
    </location>
</feature>
<feature type="modified residue" description="N6-(pyridoxal phosphate)lysine" evidence="1">
    <location>
        <position position="708"/>
    </location>
</feature>
<sequence length="959" mass="104737">MTQNLSQLEHNDAFIQRHIGSSVEQQQQMLAAVGASSLSTLIQQIVPADIQLPGPPPVGEAATEHQALAELKGIASQNQCYKSYIGMGYSPVLTPPVILRNMLENPGWYTAYTPYQPEVSQGRLEALLNFQQLTQDLTGLDLASASLLDEATAAAESMALAKRASKLKDANRFFVADDVHPQTLDVVLTRAETFGFDVIVDRAEKVLELDGIFGVLLQQVGTTGELHDYSALLAELKKRKIITSVAADIMALVLLTAPGAQGADVVFGSAQRFGVPMGYGGPHAAFFACRDEFKRSMPGRIIGVSRDAAGNTALRMAMQTREQHIRREKANSNICTSQVLLANIASLYAVYHGPQGLQRIAGRIHRMTDILAAGLQHAGLTLRFKHWFDTLTVEVKDKAAVLARALSFGINLRTDIHGAVGITLNETTSREDIQTLFALFVGDNHGLDIDQLDAAVSQHSQSIQDSMLRRDPILTHPVFNRYHSETEMMRYMHRLERKDLALNQAMIPLGSCTMKLNAAAEMIPITWPEFAELHPFCPPEQAAGYQQMIGQLSQWLVQLTGYDAVCMQPNSGAQGEYAGLLAIRRYHESRNQANRHICLIPSSAHGTNPASAQMAGMSVVVVACDKQGNIDLHDLRQKAEHAGDELSCIMVTYPSTHGVYEETIREVCQIVHQFGGQVYLDGANMNAQVGITTPGYIGADVSHLNLHKTFCIPHGGGGPGMGPIGVKAHLAPFVPGHSVVQIDGMTTQQGAVSAAPFGSASILPISWMYIRMMGADGLKQASQVAILNANYIATRLKNAYPVLYTGHDGRVAHECILDIRPLKEATGISEMDIAKRLIDFGFHAPTMSFPVAGTLMVEPTESESKVELDRFIDAMLAIRAEIEKVAQGEWPLEDNPLVNAPHTQAELVGEWTHPYSRELAVFPVAGVLENKYWPTVKRLDDVYGDRNLFCSCVPISDYE</sequence>
<evidence type="ECO:0000255" key="1">
    <source>
        <dbReference type="HAMAP-Rule" id="MF_00711"/>
    </source>
</evidence>
<gene>
    <name evidence="1" type="primary">gcvP</name>
    <name type="ordered locus">YPTS_3311</name>
</gene>
<dbReference type="EC" id="1.4.4.2" evidence="1"/>
<dbReference type="EMBL" id="CP001048">
    <property type="protein sequence ID" value="ACC90266.1"/>
    <property type="molecule type" value="Genomic_DNA"/>
</dbReference>
<dbReference type="RefSeq" id="WP_002209947.1">
    <property type="nucleotide sequence ID" value="NZ_CP009780.1"/>
</dbReference>
<dbReference type="SMR" id="B2K0Q3"/>
<dbReference type="GeneID" id="57973735"/>
<dbReference type="KEGG" id="ypb:YPTS_3311"/>
<dbReference type="PATRIC" id="fig|502801.10.peg.2752"/>
<dbReference type="GO" id="GO:0005829">
    <property type="term" value="C:cytosol"/>
    <property type="evidence" value="ECO:0007669"/>
    <property type="project" value="TreeGrafter"/>
</dbReference>
<dbReference type="GO" id="GO:0005960">
    <property type="term" value="C:glycine cleavage complex"/>
    <property type="evidence" value="ECO:0007669"/>
    <property type="project" value="TreeGrafter"/>
</dbReference>
<dbReference type="GO" id="GO:0016594">
    <property type="term" value="F:glycine binding"/>
    <property type="evidence" value="ECO:0007669"/>
    <property type="project" value="TreeGrafter"/>
</dbReference>
<dbReference type="GO" id="GO:0004375">
    <property type="term" value="F:glycine dehydrogenase (decarboxylating) activity"/>
    <property type="evidence" value="ECO:0007669"/>
    <property type="project" value="UniProtKB-EC"/>
</dbReference>
<dbReference type="GO" id="GO:0030170">
    <property type="term" value="F:pyridoxal phosphate binding"/>
    <property type="evidence" value="ECO:0007669"/>
    <property type="project" value="TreeGrafter"/>
</dbReference>
<dbReference type="GO" id="GO:0019464">
    <property type="term" value="P:glycine decarboxylation via glycine cleavage system"/>
    <property type="evidence" value="ECO:0007669"/>
    <property type="project" value="UniProtKB-UniRule"/>
</dbReference>
<dbReference type="CDD" id="cd00613">
    <property type="entry name" value="GDC-P"/>
    <property type="match status" value="2"/>
</dbReference>
<dbReference type="FunFam" id="3.40.640.10:FF:000005">
    <property type="entry name" value="Glycine dehydrogenase (decarboxylating), mitochondrial"/>
    <property type="match status" value="1"/>
</dbReference>
<dbReference type="FunFam" id="3.90.1150.10:FF:000007">
    <property type="entry name" value="Glycine dehydrogenase (decarboxylating), mitochondrial"/>
    <property type="match status" value="1"/>
</dbReference>
<dbReference type="FunFam" id="3.40.640.10:FF:000007">
    <property type="entry name" value="glycine dehydrogenase (Decarboxylating), mitochondrial"/>
    <property type="match status" value="1"/>
</dbReference>
<dbReference type="Gene3D" id="3.90.1150.10">
    <property type="entry name" value="Aspartate Aminotransferase, domain 1"/>
    <property type="match status" value="2"/>
</dbReference>
<dbReference type="Gene3D" id="3.40.640.10">
    <property type="entry name" value="Type I PLP-dependent aspartate aminotransferase-like (Major domain)"/>
    <property type="match status" value="2"/>
</dbReference>
<dbReference type="HAMAP" id="MF_00711">
    <property type="entry name" value="GcvP"/>
    <property type="match status" value="1"/>
</dbReference>
<dbReference type="InterPro" id="IPR003437">
    <property type="entry name" value="GcvP"/>
</dbReference>
<dbReference type="InterPro" id="IPR049316">
    <property type="entry name" value="GDC-P_C"/>
</dbReference>
<dbReference type="InterPro" id="IPR049315">
    <property type="entry name" value="GDC-P_N"/>
</dbReference>
<dbReference type="InterPro" id="IPR020581">
    <property type="entry name" value="GDC_P"/>
</dbReference>
<dbReference type="InterPro" id="IPR015424">
    <property type="entry name" value="PyrdxlP-dep_Trfase"/>
</dbReference>
<dbReference type="InterPro" id="IPR015421">
    <property type="entry name" value="PyrdxlP-dep_Trfase_major"/>
</dbReference>
<dbReference type="InterPro" id="IPR015422">
    <property type="entry name" value="PyrdxlP-dep_Trfase_small"/>
</dbReference>
<dbReference type="NCBIfam" id="TIGR00461">
    <property type="entry name" value="gcvP"/>
    <property type="match status" value="1"/>
</dbReference>
<dbReference type="NCBIfam" id="NF003346">
    <property type="entry name" value="PRK04366.1"/>
    <property type="match status" value="1"/>
</dbReference>
<dbReference type="PANTHER" id="PTHR11773:SF13">
    <property type="entry name" value="GLYCINE DEHYDROGENASE (DECARBOXYLATING)"/>
    <property type="match status" value="1"/>
</dbReference>
<dbReference type="PANTHER" id="PTHR11773">
    <property type="entry name" value="GLYCINE DEHYDROGENASE, DECARBOXYLATING"/>
    <property type="match status" value="1"/>
</dbReference>
<dbReference type="Pfam" id="PF21478">
    <property type="entry name" value="GcvP2_C"/>
    <property type="match status" value="1"/>
</dbReference>
<dbReference type="Pfam" id="PF02347">
    <property type="entry name" value="GDC-P"/>
    <property type="match status" value="2"/>
</dbReference>
<dbReference type="SUPFAM" id="SSF53383">
    <property type="entry name" value="PLP-dependent transferases"/>
    <property type="match status" value="2"/>
</dbReference>
<name>GCSP_YERPB</name>
<organism>
    <name type="scientific">Yersinia pseudotuberculosis serotype IB (strain PB1/+)</name>
    <dbReference type="NCBI Taxonomy" id="502801"/>
    <lineage>
        <taxon>Bacteria</taxon>
        <taxon>Pseudomonadati</taxon>
        <taxon>Pseudomonadota</taxon>
        <taxon>Gammaproteobacteria</taxon>
        <taxon>Enterobacterales</taxon>
        <taxon>Yersiniaceae</taxon>
        <taxon>Yersinia</taxon>
    </lineage>
</organism>
<keyword id="KW-0560">Oxidoreductase</keyword>
<keyword id="KW-0663">Pyridoxal phosphate</keyword>
<reference key="1">
    <citation type="submission" date="2008-04" db="EMBL/GenBank/DDBJ databases">
        <title>Complete sequence of Yersinia pseudotuberculosis PB1/+.</title>
        <authorList>
            <person name="Copeland A."/>
            <person name="Lucas S."/>
            <person name="Lapidus A."/>
            <person name="Glavina del Rio T."/>
            <person name="Dalin E."/>
            <person name="Tice H."/>
            <person name="Bruce D."/>
            <person name="Goodwin L."/>
            <person name="Pitluck S."/>
            <person name="Munk A.C."/>
            <person name="Brettin T."/>
            <person name="Detter J.C."/>
            <person name="Han C."/>
            <person name="Tapia R."/>
            <person name="Schmutz J."/>
            <person name="Larimer F."/>
            <person name="Land M."/>
            <person name="Hauser L."/>
            <person name="Challacombe J.F."/>
            <person name="Green L."/>
            <person name="Lindler L.E."/>
            <person name="Nikolich M.P."/>
            <person name="Richardson P."/>
        </authorList>
    </citation>
    <scope>NUCLEOTIDE SEQUENCE [LARGE SCALE GENOMIC DNA]</scope>
    <source>
        <strain>PB1/+</strain>
    </source>
</reference>
<accession>B2K0Q3</accession>
<protein>
    <recommendedName>
        <fullName evidence="1">Glycine dehydrogenase (decarboxylating)</fullName>
        <ecNumber evidence="1">1.4.4.2</ecNumber>
    </recommendedName>
    <alternativeName>
        <fullName evidence="1">Glycine cleavage system P-protein</fullName>
    </alternativeName>
    <alternativeName>
        <fullName evidence="1">Glycine decarboxylase</fullName>
    </alternativeName>
    <alternativeName>
        <fullName evidence="1">Glycine dehydrogenase (aminomethyl-transferring)</fullName>
    </alternativeName>
</protein>
<comment type="function">
    <text evidence="1">The glycine cleavage system catalyzes the degradation of glycine. The P protein binds the alpha-amino group of glycine through its pyridoxal phosphate cofactor; CO(2) is released and the remaining methylamine moiety is then transferred to the lipoamide cofactor of the H protein.</text>
</comment>
<comment type="catalytic activity">
    <reaction evidence="1">
        <text>N(6)-[(R)-lipoyl]-L-lysyl-[glycine-cleavage complex H protein] + glycine + H(+) = N(6)-[(R)-S(8)-aminomethyldihydrolipoyl]-L-lysyl-[glycine-cleavage complex H protein] + CO2</text>
        <dbReference type="Rhea" id="RHEA:24304"/>
        <dbReference type="Rhea" id="RHEA-COMP:10494"/>
        <dbReference type="Rhea" id="RHEA-COMP:10495"/>
        <dbReference type="ChEBI" id="CHEBI:15378"/>
        <dbReference type="ChEBI" id="CHEBI:16526"/>
        <dbReference type="ChEBI" id="CHEBI:57305"/>
        <dbReference type="ChEBI" id="CHEBI:83099"/>
        <dbReference type="ChEBI" id="CHEBI:83143"/>
        <dbReference type="EC" id="1.4.4.2"/>
    </reaction>
</comment>
<comment type="cofactor">
    <cofactor evidence="1">
        <name>pyridoxal 5'-phosphate</name>
        <dbReference type="ChEBI" id="CHEBI:597326"/>
    </cofactor>
</comment>
<comment type="subunit">
    <text evidence="1">The glycine cleavage system is composed of four proteins: P, T, L and H.</text>
</comment>
<comment type="similarity">
    <text evidence="1">Belongs to the GcvP family.</text>
</comment>